<comment type="function">
    <text evidence="1">Regulates arginine biosynthesis genes.</text>
</comment>
<comment type="pathway">
    <text>Amino-acid biosynthesis; L-arginine biosynthesis [regulation].</text>
</comment>
<comment type="subcellular location">
    <subcellularLocation>
        <location evidence="1">Cytoplasm</location>
    </subcellularLocation>
</comment>
<comment type="similarity">
    <text evidence="1">Belongs to the ArgR family.</text>
</comment>
<keyword id="KW-0028">Amino-acid biosynthesis</keyword>
<keyword id="KW-0055">Arginine biosynthesis</keyword>
<keyword id="KW-0963">Cytoplasm</keyword>
<keyword id="KW-0238">DNA-binding</keyword>
<keyword id="KW-1185">Reference proteome</keyword>
<keyword id="KW-0678">Repressor</keyword>
<keyword id="KW-0804">Transcription</keyword>
<keyword id="KW-0805">Transcription regulation</keyword>
<protein>
    <recommendedName>
        <fullName evidence="1">Arginine repressor</fullName>
    </recommendedName>
</protein>
<organism>
    <name type="scientific">Clostridium botulinum (strain Hall / ATCC 3502 / NCTC 13319 / Type A)</name>
    <dbReference type="NCBI Taxonomy" id="441771"/>
    <lineage>
        <taxon>Bacteria</taxon>
        <taxon>Bacillati</taxon>
        <taxon>Bacillota</taxon>
        <taxon>Clostridia</taxon>
        <taxon>Eubacteriales</taxon>
        <taxon>Clostridiaceae</taxon>
        <taxon>Clostridium</taxon>
    </lineage>
</organism>
<proteinExistence type="inferred from homology"/>
<name>ARGR_CLOBH</name>
<reference key="1">
    <citation type="journal article" date="2007" name="Genome Res.">
        <title>Genome sequence of a proteolytic (Group I) Clostridium botulinum strain Hall A and comparative analysis of the clostridial genomes.</title>
        <authorList>
            <person name="Sebaihia M."/>
            <person name="Peck M.W."/>
            <person name="Minton N.P."/>
            <person name="Thomson N.R."/>
            <person name="Holden M.T.G."/>
            <person name="Mitchell W.J."/>
            <person name="Carter A.T."/>
            <person name="Bentley S.D."/>
            <person name="Mason D.R."/>
            <person name="Crossman L."/>
            <person name="Paul C.J."/>
            <person name="Ivens A."/>
            <person name="Wells-Bennik M.H.J."/>
            <person name="Davis I.J."/>
            <person name="Cerdeno-Tarraga A.M."/>
            <person name="Churcher C."/>
            <person name="Quail M.A."/>
            <person name="Chillingworth T."/>
            <person name="Feltwell T."/>
            <person name="Fraser A."/>
            <person name="Goodhead I."/>
            <person name="Hance Z."/>
            <person name="Jagels K."/>
            <person name="Larke N."/>
            <person name="Maddison M."/>
            <person name="Moule S."/>
            <person name="Mungall K."/>
            <person name="Norbertczak H."/>
            <person name="Rabbinowitsch E."/>
            <person name="Sanders M."/>
            <person name="Simmonds M."/>
            <person name="White B."/>
            <person name="Whithead S."/>
            <person name="Parkhill J."/>
        </authorList>
    </citation>
    <scope>NUCLEOTIDE SEQUENCE [LARGE SCALE GENOMIC DNA]</scope>
    <source>
        <strain>Hall / ATCC 3502 / NCTC 13319 / Type A</strain>
    </source>
</reference>
<reference key="2">
    <citation type="journal article" date="2007" name="PLoS ONE">
        <title>Analysis of the neurotoxin complex genes in Clostridium botulinum A1-A4 and B1 strains: BoNT/A3, /Ba4 and /B1 clusters are located within plasmids.</title>
        <authorList>
            <person name="Smith T.J."/>
            <person name="Hill K.K."/>
            <person name="Foley B.T."/>
            <person name="Detter J.C."/>
            <person name="Munk A.C."/>
            <person name="Bruce D.C."/>
            <person name="Doggett N.A."/>
            <person name="Smith L.A."/>
            <person name="Marks J.D."/>
            <person name="Xie G."/>
            <person name="Brettin T.S."/>
        </authorList>
    </citation>
    <scope>NUCLEOTIDE SEQUENCE [LARGE SCALE GENOMIC DNA]</scope>
    <source>
        <strain>Hall / ATCC 3502 / NCTC 13319 / Type A</strain>
    </source>
</reference>
<accession>A5I302</accession>
<accession>A7G4G2</accession>
<dbReference type="EMBL" id="CP000727">
    <property type="protein sequence ID" value="ABS37419.1"/>
    <property type="molecule type" value="Genomic_DNA"/>
</dbReference>
<dbReference type="EMBL" id="AM412317">
    <property type="protein sequence ID" value="CAL83419.1"/>
    <property type="molecule type" value="Genomic_DNA"/>
</dbReference>
<dbReference type="RefSeq" id="WP_011986439.1">
    <property type="nucleotide sequence ID" value="NC_009698.1"/>
</dbReference>
<dbReference type="RefSeq" id="YP_001254380.1">
    <property type="nucleotide sequence ID" value="NC_009495.1"/>
</dbReference>
<dbReference type="RefSeq" id="YP_001387677.1">
    <property type="nucleotide sequence ID" value="NC_009698.1"/>
</dbReference>
<dbReference type="SMR" id="A5I302"/>
<dbReference type="GeneID" id="5186133"/>
<dbReference type="KEGG" id="cbh:CLC_1822"/>
<dbReference type="KEGG" id="cbo:CBO1878"/>
<dbReference type="PATRIC" id="fig|413999.7.peg.1850"/>
<dbReference type="HOGENOM" id="CLU_097103_3_0_9"/>
<dbReference type="UniPathway" id="UPA00068"/>
<dbReference type="PRO" id="PR:A5I302"/>
<dbReference type="Proteomes" id="UP000001986">
    <property type="component" value="Chromosome"/>
</dbReference>
<dbReference type="GO" id="GO:0005737">
    <property type="term" value="C:cytoplasm"/>
    <property type="evidence" value="ECO:0007669"/>
    <property type="project" value="UniProtKB-SubCell"/>
</dbReference>
<dbReference type="GO" id="GO:0005667">
    <property type="term" value="C:transcription regulator complex"/>
    <property type="evidence" value="ECO:0000318"/>
    <property type="project" value="GO_Central"/>
</dbReference>
<dbReference type="GO" id="GO:0034618">
    <property type="term" value="F:arginine binding"/>
    <property type="evidence" value="ECO:0007669"/>
    <property type="project" value="InterPro"/>
</dbReference>
<dbReference type="GO" id="GO:0000987">
    <property type="term" value="F:cis-regulatory region sequence-specific DNA binding"/>
    <property type="evidence" value="ECO:0000318"/>
    <property type="project" value="GO_Central"/>
</dbReference>
<dbReference type="GO" id="GO:0003700">
    <property type="term" value="F:DNA-binding transcription factor activity"/>
    <property type="evidence" value="ECO:0007669"/>
    <property type="project" value="UniProtKB-UniRule"/>
</dbReference>
<dbReference type="GO" id="GO:0006526">
    <property type="term" value="P:L-arginine biosynthetic process"/>
    <property type="evidence" value="ECO:0007669"/>
    <property type="project" value="UniProtKB-UniPathway"/>
</dbReference>
<dbReference type="GO" id="GO:0051259">
    <property type="term" value="P:protein complex oligomerization"/>
    <property type="evidence" value="ECO:0007669"/>
    <property type="project" value="InterPro"/>
</dbReference>
<dbReference type="GO" id="GO:1900079">
    <property type="term" value="P:regulation of arginine biosynthetic process"/>
    <property type="evidence" value="ECO:0007669"/>
    <property type="project" value="UniProtKB-UniRule"/>
</dbReference>
<dbReference type="GO" id="GO:0000821">
    <property type="term" value="P:regulation of arginine metabolic process"/>
    <property type="evidence" value="ECO:0000318"/>
    <property type="project" value="GO_Central"/>
</dbReference>
<dbReference type="Gene3D" id="3.30.1360.40">
    <property type="match status" value="1"/>
</dbReference>
<dbReference type="Gene3D" id="1.10.10.10">
    <property type="entry name" value="Winged helix-like DNA-binding domain superfamily/Winged helix DNA-binding domain"/>
    <property type="match status" value="1"/>
</dbReference>
<dbReference type="HAMAP" id="MF_00173">
    <property type="entry name" value="Arg_repressor"/>
    <property type="match status" value="1"/>
</dbReference>
<dbReference type="InterPro" id="IPR001669">
    <property type="entry name" value="Arg_repress"/>
</dbReference>
<dbReference type="InterPro" id="IPR020899">
    <property type="entry name" value="Arg_repress_C"/>
</dbReference>
<dbReference type="InterPro" id="IPR036251">
    <property type="entry name" value="Arg_repress_C_sf"/>
</dbReference>
<dbReference type="InterPro" id="IPR020900">
    <property type="entry name" value="Arg_repress_DNA-bd"/>
</dbReference>
<dbReference type="InterPro" id="IPR036388">
    <property type="entry name" value="WH-like_DNA-bd_sf"/>
</dbReference>
<dbReference type="InterPro" id="IPR036390">
    <property type="entry name" value="WH_DNA-bd_sf"/>
</dbReference>
<dbReference type="NCBIfam" id="TIGR01529">
    <property type="entry name" value="argR_whole"/>
    <property type="match status" value="1"/>
</dbReference>
<dbReference type="NCBIfam" id="NF001680">
    <property type="entry name" value="PRK00441.1"/>
    <property type="match status" value="1"/>
</dbReference>
<dbReference type="PANTHER" id="PTHR34471">
    <property type="entry name" value="ARGININE REPRESSOR"/>
    <property type="match status" value="1"/>
</dbReference>
<dbReference type="PANTHER" id="PTHR34471:SF1">
    <property type="entry name" value="ARGININE REPRESSOR"/>
    <property type="match status" value="1"/>
</dbReference>
<dbReference type="Pfam" id="PF01316">
    <property type="entry name" value="Arg_repressor"/>
    <property type="match status" value="1"/>
</dbReference>
<dbReference type="Pfam" id="PF02863">
    <property type="entry name" value="Arg_repressor_C"/>
    <property type="match status" value="1"/>
</dbReference>
<dbReference type="PRINTS" id="PR01467">
    <property type="entry name" value="ARGREPRESSOR"/>
</dbReference>
<dbReference type="SUPFAM" id="SSF55252">
    <property type="entry name" value="C-terminal domain of arginine repressor"/>
    <property type="match status" value="1"/>
</dbReference>
<dbReference type="SUPFAM" id="SSF46785">
    <property type="entry name" value="Winged helix' DNA-binding domain"/>
    <property type="match status" value="1"/>
</dbReference>
<gene>
    <name evidence="1" type="primary">argR</name>
    <name type="ordered locus">CBO1878</name>
    <name type="ordered locus">CLC_1822</name>
</gene>
<evidence type="ECO:0000255" key="1">
    <source>
        <dbReference type="HAMAP-Rule" id="MF_00173"/>
    </source>
</evidence>
<feature type="chain" id="PRO_1000023556" description="Arginine repressor">
    <location>
        <begin position="1"/>
        <end position="150"/>
    </location>
</feature>
<sequence>MKVSRHAKILEIINSKDIDTQEELAEELKKMGMNVTQATVSRDIKELKLIKVLGNTGKYKYATINHTESYMSDKLINIFAQTVINVENIDKLIIIKAISGSAPAAAEAIDTLGFDGVAGTIAGDNTIFVMARTNEKAQEITMKLKKIITA</sequence>